<reference key="1">
    <citation type="submission" date="2009-01" db="EMBL/GenBank/DDBJ databases">
        <title>Complete sequence of Clostridium cellulolyticum H10.</title>
        <authorList>
            <consortium name="US DOE Joint Genome Institute"/>
            <person name="Lucas S."/>
            <person name="Copeland A."/>
            <person name="Lapidus A."/>
            <person name="Glavina del Rio T."/>
            <person name="Dalin E."/>
            <person name="Tice H."/>
            <person name="Bruce D."/>
            <person name="Goodwin L."/>
            <person name="Pitluck S."/>
            <person name="Chertkov O."/>
            <person name="Saunders E."/>
            <person name="Brettin T."/>
            <person name="Detter J.C."/>
            <person name="Han C."/>
            <person name="Larimer F."/>
            <person name="Land M."/>
            <person name="Hauser L."/>
            <person name="Kyrpides N."/>
            <person name="Ivanova N."/>
            <person name="Zhou J."/>
            <person name="Richardson P."/>
        </authorList>
    </citation>
    <scope>NUCLEOTIDE SEQUENCE [LARGE SCALE GENOMIC DNA]</scope>
    <source>
        <strain>ATCC 35319 / DSM 5812 / JCM 6584 / H10</strain>
    </source>
</reference>
<accession>B8I7X9</accession>
<feature type="chain" id="PRO_1000165878" description="Large ribosomal subunit protein uL3">
    <location>
        <begin position="1"/>
        <end position="212"/>
    </location>
</feature>
<organism>
    <name type="scientific">Ruminiclostridium cellulolyticum (strain ATCC 35319 / DSM 5812 / JCM 6584 / H10)</name>
    <name type="common">Clostridium cellulolyticum</name>
    <dbReference type="NCBI Taxonomy" id="394503"/>
    <lineage>
        <taxon>Bacteria</taxon>
        <taxon>Bacillati</taxon>
        <taxon>Bacillota</taxon>
        <taxon>Clostridia</taxon>
        <taxon>Eubacteriales</taxon>
        <taxon>Oscillospiraceae</taxon>
        <taxon>Ruminiclostridium</taxon>
    </lineage>
</organism>
<sequence length="212" mass="23008">MKKAMLGKKIGMTQIFDENGLVIPVTVVEAGPLTVVQKKTVETDGYDAIKVGYVKVAEKKLSKPNLGQFSKTKLAPMKHLKEFRLEDISGFEVGQEIKAENMFQSGDKIDVSGVSKGKGFQGVTKRYGQRTGPNTHGSMYHRRIGSMGSGTNPGRVFKGKKLPGHMGRETITVQNLEVVRVDSDRNLILIKGAIPGPKGGLLVIKNTVKSGK</sequence>
<keyword id="KW-1185">Reference proteome</keyword>
<keyword id="KW-0687">Ribonucleoprotein</keyword>
<keyword id="KW-0689">Ribosomal protein</keyword>
<keyword id="KW-0694">RNA-binding</keyword>
<keyword id="KW-0699">rRNA-binding</keyword>
<gene>
    <name evidence="1" type="primary">rplC</name>
    <name type="ordered locus">Ccel_0758</name>
</gene>
<proteinExistence type="inferred from homology"/>
<evidence type="ECO:0000255" key="1">
    <source>
        <dbReference type="HAMAP-Rule" id="MF_01325"/>
    </source>
</evidence>
<evidence type="ECO:0000305" key="2"/>
<dbReference type="EMBL" id="CP001348">
    <property type="protein sequence ID" value="ACL75136.1"/>
    <property type="molecule type" value="Genomic_DNA"/>
</dbReference>
<dbReference type="RefSeq" id="WP_015924301.1">
    <property type="nucleotide sequence ID" value="NC_011898.1"/>
</dbReference>
<dbReference type="SMR" id="B8I7X9"/>
<dbReference type="STRING" id="394503.Ccel_0758"/>
<dbReference type="KEGG" id="cce:Ccel_0758"/>
<dbReference type="eggNOG" id="COG0087">
    <property type="taxonomic scope" value="Bacteria"/>
</dbReference>
<dbReference type="HOGENOM" id="CLU_044142_4_1_9"/>
<dbReference type="OrthoDB" id="9806135at2"/>
<dbReference type="Proteomes" id="UP000001349">
    <property type="component" value="Chromosome"/>
</dbReference>
<dbReference type="GO" id="GO:0022625">
    <property type="term" value="C:cytosolic large ribosomal subunit"/>
    <property type="evidence" value="ECO:0007669"/>
    <property type="project" value="TreeGrafter"/>
</dbReference>
<dbReference type="GO" id="GO:0019843">
    <property type="term" value="F:rRNA binding"/>
    <property type="evidence" value="ECO:0007669"/>
    <property type="project" value="UniProtKB-UniRule"/>
</dbReference>
<dbReference type="GO" id="GO:0003735">
    <property type="term" value="F:structural constituent of ribosome"/>
    <property type="evidence" value="ECO:0007669"/>
    <property type="project" value="InterPro"/>
</dbReference>
<dbReference type="GO" id="GO:0006412">
    <property type="term" value="P:translation"/>
    <property type="evidence" value="ECO:0007669"/>
    <property type="project" value="UniProtKB-UniRule"/>
</dbReference>
<dbReference type="FunFam" id="2.40.30.10:FF:000004">
    <property type="entry name" value="50S ribosomal protein L3"/>
    <property type="match status" value="1"/>
</dbReference>
<dbReference type="FunFam" id="3.30.160.810:FF:000001">
    <property type="entry name" value="50S ribosomal protein L3"/>
    <property type="match status" value="1"/>
</dbReference>
<dbReference type="Gene3D" id="3.30.160.810">
    <property type="match status" value="1"/>
</dbReference>
<dbReference type="Gene3D" id="2.40.30.10">
    <property type="entry name" value="Translation factors"/>
    <property type="match status" value="1"/>
</dbReference>
<dbReference type="HAMAP" id="MF_01325_B">
    <property type="entry name" value="Ribosomal_uL3_B"/>
    <property type="match status" value="1"/>
</dbReference>
<dbReference type="InterPro" id="IPR000597">
    <property type="entry name" value="Ribosomal_uL3"/>
</dbReference>
<dbReference type="InterPro" id="IPR019927">
    <property type="entry name" value="Ribosomal_uL3_bac/org-type"/>
</dbReference>
<dbReference type="InterPro" id="IPR019926">
    <property type="entry name" value="Ribosomal_uL3_CS"/>
</dbReference>
<dbReference type="InterPro" id="IPR009000">
    <property type="entry name" value="Transl_B-barrel_sf"/>
</dbReference>
<dbReference type="NCBIfam" id="TIGR03625">
    <property type="entry name" value="L3_bact"/>
    <property type="match status" value="1"/>
</dbReference>
<dbReference type="PANTHER" id="PTHR11229">
    <property type="entry name" value="50S RIBOSOMAL PROTEIN L3"/>
    <property type="match status" value="1"/>
</dbReference>
<dbReference type="PANTHER" id="PTHR11229:SF16">
    <property type="entry name" value="LARGE RIBOSOMAL SUBUNIT PROTEIN UL3C"/>
    <property type="match status" value="1"/>
</dbReference>
<dbReference type="Pfam" id="PF00297">
    <property type="entry name" value="Ribosomal_L3"/>
    <property type="match status" value="1"/>
</dbReference>
<dbReference type="SUPFAM" id="SSF50447">
    <property type="entry name" value="Translation proteins"/>
    <property type="match status" value="1"/>
</dbReference>
<dbReference type="PROSITE" id="PS00474">
    <property type="entry name" value="RIBOSOMAL_L3"/>
    <property type="match status" value="1"/>
</dbReference>
<name>RL3_RUMCH</name>
<comment type="function">
    <text evidence="1">One of the primary rRNA binding proteins, it binds directly near the 3'-end of the 23S rRNA, where it nucleates assembly of the 50S subunit.</text>
</comment>
<comment type="subunit">
    <text evidence="1">Part of the 50S ribosomal subunit. Forms a cluster with proteins L14 and L19.</text>
</comment>
<comment type="similarity">
    <text evidence="1">Belongs to the universal ribosomal protein uL3 family.</text>
</comment>
<protein>
    <recommendedName>
        <fullName evidence="1">Large ribosomal subunit protein uL3</fullName>
    </recommendedName>
    <alternativeName>
        <fullName evidence="2">50S ribosomal protein L3</fullName>
    </alternativeName>
</protein>